<organism>
    <name type="scientific">Salmonella paratyphi A (strain ATCC 9150 / SARB42)</name>
    <dbReference type="NCBI Taxonomy" id="295319"/>
    <lineage>
        <taxon>Bacteria</taxon>
        <taxon>Pseudomonadati</taxon>
        <taxon>Pseudomonadota</taxon>
        <taxon>Gammaproteobacteria</taxon>
        <taxon>Enterobacterales</taxon>
        <taxon>Enterobacteriaceae</taxon>
        <taxon>Salmonella</taxon>
    </lineage>
</organism>
<accession>Q5PFQ8</accession>
<proteinExistence type="inferred from homology"/>
<name>PHNS_SALPA</name>
<gene>
    <name type="primary">phnS</name>
    <name type="ordered locus">SPA2294</name>
</gene>
<dbReference type="EMBL" id="CP000026">
    <property type="protein sequence ID" value="AAV78179.1"/>
    <property type="molecule type" value="Genomic_DNA"/>
</dbReference>
<dbReference type="RefSeq" id="WP_000778008.1">
    <property type="nucleotide sequence ID" value="NC_006511.1"/>
</dbReference>
<dbReference type="SMR" id="Q5PFQ8"/>
<dbReference type="KEGG" id="spt:SPA2294"/>
<dbReference type="HOGENOM" id="CLU_026974_3_2_6"/>
<dbReference type="Proteomes" id="UP000008185">
    <property type="component" value="Chromosome"/>
</dbReference>
<dbReference type="GO" id="GO:0030288">
    <property type="term" value="C:outer membrane-bounded periplasmic space"/>
    <property type="evidence" value="ECO:0007669"/>
    <property type="project" value="TreeGrafter"/>
</dbReference>
<dbReference type="GO" id="GO:0030975">
    <property type="term" value="F:thiamine binding"/>
    <property type="evidence" value="ECO:0007669"/>
    <property type="project" value="TreeGrafter"/>
</dbReference>
<dbReference type="GO" id="GO:0030976">
    <property type="term" value="F:thiamine pyrophosphate binding"/>
    <property type="evidence" value="ECO:0007669"/>
    <property type="project" value="TreeGrafter"/>
</dbReference>
<dbReference type="GO" id="GO:0015888">
    <property type="term" value="P:thiamine transport"/>
    <property type="evidence" value="ECO:0007669"/>
    <property type="project" value="TreeGrafter"/>
</dbReference>
<dbReference type="Gene3D" id="3.40.190.10">
    <property type="entry name" value="Periplasmic binding protein-like II"/>
    <property type="match status" value="2"/>
</dbReference>
<dbReference type="InterPro" id="IPR017637">
    <property type="entry name" value="AminoethylPonate_ABC-bd"/>
</dbReference>
<dbReference type="InterPro" id="IPR006059">
    <property type="entry name" value="SBP"/>
</dbReference>
<dbReference type="NCBIfam" id="TIGR03227">
    <property type="entry name" value="PhnS"/>
    <property type="match status" value="1"/>
</dbReference>
<dbReference type="NCBIfam" id="NF011620">
    <property type="entry name" value="PRK15046.1"/>
    <property type="match status" value="1"/>
</dbReference>
<dbReference type="PANTHER" id="PTHR30006:SF3">
    <property type="entry name" value="THIAMINE-BINDING PERIPLASMIC PROTEIN"/>
    <property type="match status" value="1"/>
</dbReference>
<dbReference type="PANTHER" id="PTHR30006">
    <property type="entry name" value="THIAMINE-BINDING PERIPLASMIC PROTEIN-RELATED"/>
    <property type="match status" value="1"/>
</dbReference>
<dbReference type="Pfam" id="PF01547">
    <property type="entry name" value="SBP_bac_1"/>
    <property type="match status" value="1"/>
</dbReference>
<dbReference type="SUPFAM" id="SSF53850">
    <property type="entry name" value="Periplasmic binding protein-like II"/>
    <property type="match status" value="1"/>
</dbReference>
<sequence length="337" mass="36517">MKLSRLALLSVFALASAPSWAESVVTVYSIDGLHDGDNSWYQVQFDAFTKATGITVRYVEGGGGVVVERLAKERTNPQADVLVTAPPFIQRAAAEKLLANFNTDAASAIPDANNLYSPLVKNYLSFIYNSKLLKTAPASWQDLLDGKFKNKLQYSTPGQAADGTAVMLQAFHSFGSKDAGFAYLGKLQANNVGPSASTGKLTALVNKGEIYVANGDLQMNLAQMERNPNVKIFWPANDKGERSALAIPYVIGLVQGAPQSENGKKLINFLLSKEAQTRVSELSWGMPVRSDVTPSDEHYKAATAALEGVQSWQPNWDDVAVSLSADISRWHKVTESE</sequence>
<feature type="signal peptide" evidence="2">
    <location>
        <begin position="1"/>
        <end position="21"/>
    </location>
</feature>
<feature type="chain" id="PRO_0000287398" description="Putative 2-aminoethylphosphonate-binding periplasmic protein">
    <location>
        <begin position="22"/>
        <end position="337"/>
    </location>
</feature>
<evidence type="ECO:0000250" key="1"/>
<evidence type="ECO:0000255" key="2"/>
<evidence type="ECO:0000305" key="3"/>
<protein>
    <recommendedName>
        <fullName>Putative 2-aminoethylphosphonate-binding periplasmic protein</fullName>
    </recommendedName>
</protein>
<comment type="function">
    <text evidence="1">Probably part of the PhnSTUV complex (TC 3.A.1.11.5) involved in 2-aminoethylphosphonate import.</text>
</comment>
<comment type="subcellular location">
    <subcellularLocation>
        <location evidence="3">Periplasm</location>
    </subcellularLocation>
</comment>
<comment type="similarity">
    <text evidence="3">Belongs to the bacterial solute-binding protein 1 family.</text>
</comment>
<reference key="1">
    <citation type="journal article" date="2004" name="Nat. Genet.">
        <title>Comparison of genome degradation in Paratyphi A and Typhi, human-restricted serovars of Salmonella enterica that cause typhoid.</title>
        <authorList>
            <person name="McClelland M."/>
            <person name="Sanderson K.E."/>
            <person name="Clifton S.W."/>
            <person name="Latreille P."/>
            <person name="Porwollik S."/>
            <person name="Sabo A."/>
            <person name="Meyer R."/>
            <person name="Bieri T."/>
            <person name="Ozersky P."/>
            <person name="McLellan M."/>
            <person name="Harkins C.R."/>
            <person name="Wang C."/>
            <person name="Nguyen C."/>
            <person name="Berghoff A."/>
            <person name="Elliott G."/>
            <person name="Kohlberg S."/>
            <person name="Strong C."/>
            <person name="Du F."/>
            <person name="Carter J."/>
            <person name="Kremizki C."/>
            <person name="Layman D."/>
            <person name="Leonard S."/>
            <person name="Sun H."/>
            <person name="Fulton L."/>
            <person name="Nash W."/>
            <person name="Miner T."/>
            <person name="Minx P."/>
            <person name="Delehaunty K."/>
            <person name="Fronick C."/>
            <person name="Magrini V."/>
            <person name="Nhan M."/>
            <person name="Warren W."/>
            <person name="Florea L."/>
            <person name="Spieth J."/>
            <person name="Wilson R.K."/>
        </authorList>
    </citation>
    <scope>NUCLEOTIDE SEQUENCE [LARGE SCALE GENOMIC DNA]</scope>
    <source>
        <strain>ATCC 9150 / SARB42</strain>
    </source>
</reference>
<keyword id="KW-0574">Periplasm</keyword>
<keyword id="KW-0732">Signal</keyword>
<keyword id="KW-0813">Transport</keyword>